<dbReference type="EC" id="2.7.-.-" evidence="1"/>
<dbReference type="EMBL" id="AE005674">
    <property type="protein sequence ID" value="AAN45348.1"/>
    <property type="molecule type" value="Genomic_DNA"/>
</dbReference>
<dbReference type="EMBL" id="AE014073">
    <property type="protein sequence ID" value="AAP18850.1"/>
    <property type="molecule type" value="Genomic_DNA"/>
</dbReference>
<dbReference type="RefSeq" id="NP_709641.1">
    <property type="nucleotide sequence ID" value="NC_004337.2"/>
</dbReference>
<dbReference type="RefSeq" id="WP_000187530.1">
    <property type="nucleotide sequence ID" value="NZ_WPGW01000036.1"/>
</dbReference>
<dbReference type="SMR" id="P0A6A2"/>
<dbReference type="STRING" id="198214.SF3913"/>
<dbReference type="PaxDb" id="198214-SF3913"/>
<dbReference type="GeneID" id="1025448"/>
<dbReference type="GeneID" id="75204829"/>
<dbReference type="KEGG" id="sfl:SF3913"/>
<dbReference type="KEGG" id="sfx:S3841"/>
<dbReference type="PATRIC" id="fig|198214.7.peg.4613"/>
<dbReference type="HOGENOM" id="CLU_006533_0_0_6"/>
<dbReference type="UniPathway" id="UPA00232"/>
<dbReference type="Proteomes" id="UP000001006">
    <property type="component" value="Chromosome"/>
</dbReference>
<dbReference type="Proteomes" id="UP000002673">
    <property type="component" value="Chromosome"/>
</dbReference>
<dbReference type="GO" id="GO:0005886">
    <property type="term" value="C:plasma membrane"/>
    <property type="evidence" value="ECO:0007669"/>
    <property type="project" value="UniProtKB-SubCell"/>
</dbReference>
<dbReference type="GO" id="GO:0005524">
    <property type="term" value="F:ATP binding"/>
    <property type="evidence" value="ECO:0007669"/>
    <property type="project" value="UniProtKB-KW"/>
</dbReference>
<dbReference type="GO" id="GO:0004672">
    <property type="term" value="F:protein kinase activity"/>
    <property type="evidence" value="ECO:0007669"/>
    <property type="project" value="UniProtKB-UniRule"/>
</dbReference>
<dbReference type="GO" id="GO:0010795">
    <property type="term" value="P:regulation of ubiquinone biosynthetic process"/>
    <property type="evidence" value="ECO:0007669"/>
    <property type="project" value="UniProtKB-UniRule"/>
</dbReference>
<dbReference type="GO" id="GO:0006744">
    <property type="term" value="P:ubiquinone biosynthetic process"/>
    <property type="evidence" value="ECO:0007669"/>
    <property type="project" value="UniProtKB-UniPathway"/>
</dbReference>
<dbReference type="CDD" id="cd13972">
    <property type="entry name" value="UbiB"/>
    <property type="match status" value="1"/>
</dbReference>
<dbReference type="HAMAP" id="MF_00414">
    <property type="entry name" value="UbiB"/>
    <property type="match status" value="1"/>
</dbReference>
<dbReference type="InterPro" id="IPR004147">
    <property type="entry name" value="ABC1_dom"/>
</dbReference>
<dbReference type="InterPro" id="IPR011009">
    <property type="entry name" value="Kinase-like_dom_sf"/>
</dbReference>
<dbReference type="InterPro" id="IPR010232">
    <property type="entry name" value="UbiB"/>
</dbReference>
<dbReference type="InterPro" id="IPR045308">
    <property type="entry name" value="UbiB_bact"/>
</dbReference>
<dbReference type="InterPro" id="IPR050154">
    <property type="entry name" value="UbiB_kinase"/>
</dbReference>
<dbReference type="NCBIfam" id="NF003404">
    <property type="entry name" value="PRK04750.1"/>
    <property type="match status" value="1"/>
</dbReference>
<dbReference type="NCBIfam" id="TIGR01982">
    <property type="entry name" value="UbiB"/>
    <property type="match status" value="1"/>
</dbReference>
<dbReference type="PANTHER" id="PTHR10566">
    <property type="entry name" value="CHAPERONE-ACTIVITY OF BC1 COMPLEX CABC1 -RELATED"/>
    <property type="match status" value="1"/>
</dbReference>
<dbReference type="PANTHER" id="PTHR10566:SF113">
    <property type="entry name" value="PROTEIN ACTIVITY OF BC1 COMPLEX KINASE 7, CHLOROPLASTIC"/>
    <property type="match status" value="1"/>
</dbReference>
<dbReference type="Pfam" id="PF03109">
    <property type="entry name" value="ABC1"/>
    <property type="match status" value="1"/>
</dbReference>
<dbReference type="SUPFAM" id="SSF56112">
    <property type="entry name" value="Protein kinase-like (PK-like)"/>
    <property type="match status" value="1"/>
</dbReference>
<feature type="chain" id="PRO_0000200719" description="Probable protein kinase UbiB">
    <location>
        <begin position="1"/>
        <end position="546"/>
    </location>
</feature>
<feature type="transmembrane region" description="Helical" evidence="1">
    <location>
        <begin position="501"/>
        <end position="521"/>
    </location>
</feature>
<feature type="transmembrane region" description="Helical" evidence="1">
    <location>
        <begin position="522"/>
        <end position="542"/>
    </location>
</feature>
<feature type="domain" description="Protein kinase" evidence="1">
    <location>
        <begin position="124"/>
        <end position="502"/>
    </location>
</feature>
<feature type="active site" description="Proton acceptor" evidence="1">
    <location>
        <position position="288"/>
    </location>
</feature>
<feature type="binding site" evidence="1">
    <location>
        <begin position="130"/>
        <end position="138"/>
    </location>
    <ligand>
        <name>ATP</name>
        <dbReference type="ChEBI" id="CHEBI:30616"/>
    </ligand>
</feature>
<feature type="binding site" evidence="1">
    <location>
        <position position="153"/>
    </location>
    <ligand>
        <name>ATP</name>
        <dbReference type="ChEBI" id="CHEBI:30616"/>
    </ligand>
</feature>
<accession>P0A6A2</accession>
<accession>P27853</accession>
<accession>P27854</accession>
<accession>P27855</accession>
<accession>P76764</accession>
<proteinExistence type="inferred from homology"/>
<comment type="function">
    <text evidence="1">Is probably a protein kinase regulator of UbiI activity which is involved in aerobic coenzyme Q (ubiquinone) biosynthesis.</text>
</comment>
<comment type="pathway">
    <text>Cofactor biosynthesis; ubiquinone biosynthesis [regulation].</text>
</comment>
<comment type="subcellular location">
    <subcellularLocation>
        <location evidence="1">Cell inner membrane</location>
        <topology evidence="1">Multi-pass membrane protein</topology>
    </subcellularLocation>
</comment>
<comment type="similarity">
    <text evidence="1">Belongs to the ABC1 family. UbiB subfamily.</text>
</comment>
<name>UBIB_SHIFL</name>
<protein>
    <recommendedName>
        <fullName evidence="1">Probable protein kinase UbiB</fullName>
        <ecNumber evidence="1">2.7.-.-</ecNumber>
    </recommendedName>
    <alternativeName>
        <fullName evidence="1">Ubiquinone biosynthesis protein UbiB</fullName>
    </alternativeName>
</protein>
<sequence>MTPGEVRRLYFIIRTFLSYGLDELIPKMRITLPLRLWRYSLFWMPNRHKDKLLGERLRLALQELGPVWIKFGQMLSTRRDLFPPHIADQLALLQDKVAPFDGKLAKQQIEAAMGGLPVEAWFDDFEIKPLASASIAQVHTARLKSNGKEVVIKVIRPDILPVIKADLKLIYRLARWVPRLLPDGRRLRPTEVVREYEKTLIDELNLLRESANAIQLRRNFEDSPMLYIPEVYPDYCSEGMMVMERIYGIPVSDVAALEKNGTNMKLLAERGVQVFFTQVFRDSFFHADMHPGNIFVSYEHPENPKYIGIDCGIVGSLNKEDKRYLAENFIAFFNRDYRKVAELHVDSGWVPPDTNVEEFEFAIRTVCEPIFEKPLAEISFGHVLLNLFNTARRFNMEVQPQLVLLQKTLLYVEGVGRQLYPQLDLWKTAKPFLESWIKDQVGIPALVRAFKEKAPFWVEKMPELPELVYDSLRQGKYLQHSVDKIARELQSNHVRQGQSRYFLGIGATLVLSGTFLLVSRPEWGLMPGWLMAGGLIAWFVGWRKTR</sequence>
<gene>
    <name evidence="1" type="primary">ubiB</name>
    <name type="synonym">aarF</name>
    <name type="ordered locus">SF3913</name>
    <name type="ordered locus">S3841</name>
</gene>
<keyword id="KW-0067">ATP-binding</keyword>
<keyword id="KW-0997">Cell inner membrane</keyword>
<keyword id="KW-1003">Cell membrane</keyword>
<keyword id="KW-0418">Kinase</keyword>
<keyword id="KW-0472">Membrane</keyword>
<keyword id="KW-0547">Nucleotide-binding</keyword>
<keyword id="KW-1185">Reference proteome</keyword>
<keyword id="KW-0808">Transferase</keyword>
<keyword id="KW-0812">Transmembrane</keyword>
<keyword id="KW-1133">Transmembrane helix</keyword>
<keyword id="KW-0831">Ubiquinone biosynthesis</keyword>
<reference key="1">
    <citation type="journal article" date="2002" name="Nucleic Acids Res.">
        <title>Genome sequence of Shigella flexneri 2a: insights into pathogenicity through comparison with genomes of Escherichia coli K12 and O157.</title>
        <authorList>
            <person name="Jin Q."/>
            <person name="Yuan Z."/>
            <person name="Xu J."/>
            <person name="Wang Y."/>
            <person name="Shen Y."/>
            <person name="Lu W."/>
            <person name="Wang J."/>
            <person name="Liu H."/>
            <person name="Yang J."/>
            <person name="Yang F."/>
            <person name="Zhang X."/>
            <person name="Zhang J."/>
            <person name="Yang G."/>
            <person name="Wu H."/>
            <person name="Qu D."/>
            <person name="Dong J."/>
            <person name="Sun L."/>
            <person name="Xue Y."/>
            <person name="Zhao A."/>
            <person name="Gao Y."/>
            <person name="Zhu J."/>
            <person name="Kan B."/>
            <person name="Ding K."/>
            <person name="Chen S."/>
            <person name="Cheng H."/>
            <person name="Yao Z."/>
            <person name="He B."/>
            <person name="Chen R."/>
            <person name="Ma D."/>
            <person name="Qiang B."/>
            <person name="Wen Y."/>
            <person name="Hou Y."/>
            <person name="Yu J."/>
        </authorList>
    </citation>
    <scope>NUCLEOTIDE SEQUENCE [LARGE SCALE GENOMIC DNA]</scope>
    <source>
        <strain>301 / Serotype 2a</strain>
    </source>
</reference>
<reference key="2">
    <citation type="journal article" date="2003" name="Infect. Immun.">
        <title>Complete genome sequence and comparative genomics of Shigella flexneri serotype 2a strain 2457T.</title>
        <authorList>
            <person name="Wei J."/>
            <person name="Goldberg M.B."/>
            <person name="Burland V."/>
            <person name="Venkatesan M.M."/>
            <person name="Deng W."/>
            <person name="Fournier G."/>
            <person name="Mayhew G.F."/>
            <person name="Plunkett G. III"/>
            <person name="Rose D.J."/>
            <person name="Darling A."/>
            <person name="Mau B."/>
            <person name="Perna N.T."/>
            <person name="Payne S.M."/>
            <person name="Runyen-Janecky L.J."/>
            <person name="Zhou S."/>
            <person name="Schwartz D.C."/>
            <person name="Blattner F.R."/>
        </authorList>
    </citation>
    <scope>NUCLEOTIDE SEQUENCE [LARGE SCALE GENOMIC DNA]</scope>
    <source>
        <strain>ATCC 700930 / 2457T / Serotype 2a</strain>
    </source>
</reference>
<evidence type="ECO:0000255" key="1">
    <source>
        <dbReference type="HAMAP-Rule" id="MF_00414"/>
    </source>
</evidence>
<organism>
    <name type="scientific">Shigella flexneri</name>
    <dbReference type="NCBI Taxonomy" id="623"/>
    <lineage>
        <taxon>Bacteria</taxon>
        <taxon>Pseudomonadati</taxon>
        <taxon>Pseudomonadota</taxon>
        <taxon>Gammaproteobacteria</taxon>
        <taxon>Enterobacterales</taxon>
        <taxon>Enterobacteriaceae</taxon>
        <taxon>Shigella</taxon>
    </lineage>
</organism>